<gene>
    <name evidence="1" type="primary">rpsM</name>
    <name type="ordered locus">Dde_2234</name>
</gene>
<keyword id="KW-1185">Reference proteome</keyword>
<keyword id="KW-0687">Ribonucleoprotein</keyword>
<keyword id="KW-0689">Ribosomal protein</keyword>
<keyword id="KW-0694">RNA-binding</keyword>
<keyword id="KW-0699">rRNA-binding</keyword>
<keyword id="KW-0820">tRNA-binding</keyword>
<feature type="chain" id="PRO_0000230501" description="Small ribosomal subunit protein uS13">
    <location>
        <begin position="1"/>
        <end position="122"/>
    </location>
</feature>
<feature type="region of interest" description="Disordered" evidence="2">
    <location>
        <begin position="89"/>
        <end position="122"/>
    </location>
</feature>
<protein>
    <recommendedName>
        <fullName evidence="1">Small ribosomal subunit protein uS13</fullName>
    </recommendedName>
    <alternativeName>
        <fullName evidence="3">30S ribosomal protein S13</fullName>
    </alternativeName>
</protein>
<dbReference type="EMBL" id="CP000112">
    <property type="protein sequence ID" value="ABB39031.1"/>
    <property type="molecule type" value="Genomic_DNA"/>
</dbReference>
<dbReference type="RefSeq" id="WP_011368122.1">
    <property type="nucleotide sequence ID" value="NC_007519.1"/>
</dbReference>
<dbReference type="SMR" id="Q30Z65"/>
<dbReference type="STRING" id="207559.Dde_2234"/>
<dbReference type="KEGG" id="dde:Dde_2234"/>
<dbReference type="eggNOG" id="COG0099">
    <property type="taxonomic scope" value="Bacteria"/>
</dbReference>
<dbReference type="HOGENOM" id="CLU_103849_1_2_7"/>
<dbReference type="Proteomes" id="UP000002710">
    <property type="component" value="Chromosome"/>
</dbReference>
<dbReference type="GO" id="GO:0005829">
    <property type="term" value="C:cytosol"/>
    <property type="evidence" value="ECO:0007669"/>
    <property type="project" value="TreeGrafter"/>
</dbReference>
<dbReference type="GO" id="GO:0015935">
    <property type="term" value="C:small ribosomal subunit"/>
    <property type="evidence" value="ECO:0007669"/>
    <property type="project" value="TreeGrafter"/>
</dbReference>
<dbReference type="GO" id="GO:0019843">
    <property type="term" value="F:rRNA binding"/>
    <property type="evidence" value="ECO:0007669"/>
    <property type="project" value="UniProtKB-UniRule"/>
</dbReference>
<dbReference type="GO" id="GO:0003735">
    <property type="term" value="F:structural constituent of ribosome"/>
    <property type="evidence" value="ECO:0007669"/>
    <property type="project" value="InterPro"/>
</dbReference>
<dbReference type="GO" id="GO:0000049">
    <property type="term" value="F:tRNA binding"/>
    <property type="evidence" value="ECO:0007669"/>
    <property type="project" value="UniProtKB-UniRule"/>
</dbReference>
<dbReference type="GO" id="GO:0006412">
    <property type="term" value="P:translation"/>
    <property type="evidence" value="ECO:0007669"/>
    <property type="project" value="UniProtKB-UniRule"/>
</dbReference>
<dbReference type="FunFam" id="1.10.8.50:FF:000001">
    <property type="entry name" value="30S ribosomal protein S13"/>
    <property type="match status" value="1"/>
</dbReference>
<dbReference type="FunFam" id="4.10.910.10:FF:000001">
    <property type="entry name" value="30S ribosomal protein S13"/>
    <property type="match status" value="1"/>
</dbReference>
<dbReference type="Gene3D" id="1.10.8.50">
    <property type="match status" value="1"/>
</dbReference>
<dbReference type="Gene3D" id="4.10.910.10">
    <property type="entry name" value="30s ribosomal protein s13, domain 2"/>
    <property type="match status" value="1"/>
</dbReference>
<dbReference type="HAMAP" id="MF_01315">
    <property type="entry name" value="Ribosomal_uS13"/>
    <property type="match status" value="1"/>
</dbReference>
<dbReference type="InterPro" id="IPR027437">
    <property type="entry name" value="Rbsml_uS13_C"/>
</dbReference>
<dbReference type="InterPro" id="IPR001892">
    <property type="entry name" value="Ribosomal_uS13"/>
</dbReference>
<dbReference type="InterPro" id="IPR010979">
    <property type="entry name" value="Ribosomal_uS13-like_H2TH"/>
</dbReference>
<dbReference type="InterPro" id="IPR019980">
    <property type="entry name" value="Ribosomal_uS13_bac-type"/>
</dbReference>
<dbReference type="NCBIfam" id="TIGR03631">
    <property type="entry name" value="uS13_bact"/>
    <property type="match status" value="1"/>
</dbReference>
<dbReference type="PANTHER" id="PTHR10871">
    <property type="entry name" value="30S RIBOSOMAL PROTEIN S13/40S RIBOSOMAL PROTEIN S18"/>
    <property type="match status" value="1"/>
</dbReference>
<dbReference type="PANTHER" id="PTHR10871:SF1">
    <property type="entry name" value="SMALL RIBOSOMAL SUBUNIT PROTEIN US13M"/>
    <property type="match status" value="1"/>
</dbReference>
<dbReference type="Pfam" id="PF00416">
    <property type="entry name" value="Ribosomal_S13"/>
    <property type="match status" value="1"/>
</dbReference>
<dbReference type="PIRSF" id="PIRSF002134">
    <property type="entry name" value="Ribosomal_S13"/>
    <property type="match status" value="1"/>
</dbReference>
<dbReference type="SUPFAM" id="SSF46946">
    <property type="entry name" value="S13-like H2TH domain"/>
    <property type="match status" value="1"/>
</dbReference>
<dbReference type="PROSITE" id="PS50159">
    <property type="entry name" value="RIBOSOMAL_S13_2"/>
    <property type="match status" value="1"/>
</dbReference>
<reference key="1">
    <citation type="journal article" date="2011" name="J. Bacteriol.">
        <title>Complete genome sequence and updated annotation of Desulfovibrio alaskensis G20.</title>
        <authorList>
            <person name="Hauser L.J."/>
            <person name="Land M.L."/>
            <person name="Brown S.D."/>
            <person name="Larimer F."/>
            <person name="Keller K.L."/>
            <person name="Rapp-Giles B.J."/>
            <person name="Price M.N."/>
            <person name="Lin M."/>
            <person name="Bruce D.C."/>
            <person name="Detter J.C."/>
            <person name="Tapia R."/>
            <person name="Han C.S."/>
            <person name="Goodwin L.A."/>
            <person name="Cheng J.F."/>
            <person name="Pitluck S."/>
            <person name="Copeland A."/>
            <person name="Lucas S."/>
            <person name="Nolan M."/>
            <person name="Lapidus A.L."/>
            <person name="Palumbo A.V."/>
            <person name="Wall J.D."/>
        </authorList>
    </citation>
    <scope>NUCLEOTIDE SEQUENCE [LARGE SCALE GENOMIC DNA]</scope>
    <source>
        <strain>ATCC BAA-1058 / DSM 17464 / G20</strain>
    </source>
</reference>
<accession>Q30Z65</accession>
<comment type="function">
    <text evidence="1">Located at the top of the head of the 30S subunit, it contacts several helices of the 16S rRNA. In the 70S ribosome it contacts the 23S rRNA (bridge B1a) and protein L5 of the 50S subunit (bridge B1b), connecting the 2 subunits; these bridges are implicated in subunit movement. Contacts the tRNAs in the A and P-sites.</text>
</comment>
<comment type="subunit">
    <text evidence="1">Part of the 30S ribosomal subunit. Forms a loose heterodimer with protein S19. Forms two bridges to the 50S subunit in the 70S ribosome.</text>
</comment>
<comment type="similarity">
    <text evidence="1">Belongs to the universal ribosomal protein uS13 family.</text>
</comment>
<proteinExistence type="inferred from homology"/>
<name>RS13_OLEA2</name>
<organism>
    <name type="scientific">Oleidesulfovibrio alaskensis (strain ATCC BAA-1058 / DSM 17464 / G20)</name>
    <name type="common">Desulfovibrio alaskensis</name>
    <dbReference type="NCBI Taxonomy" id="207559"/>
    <lineage>
        <taxon>Bacteria</taxon>
        <taxon>Pseudomonadati</taxon>
        <taxon>Thermodesulfobacteriota</taxon>
        <taxon>Desulfovibrionia</taxon>
        <taxon>Desulfovibrionales</taxon>
        <taxon>Desulfovibrionaceae</taxon>
        <taxon>Oleidesulfovibrio</taxon>
    </lineage>
</organism>
<sequence length="122" mass="13810">MARIAGVDLPRGKRVDIALTYIYGVGRATALEILDTTGVDWTRNIDDLSADEVNEIRKEIEQNHKVEGDLRREISSNIKRLMDIGCHRGLRHRRGLPARGQRTKTNARTRKGPRRGVAGKRK</sequence>
<evidence type="ECO:0000255" key="1">
    <source>
        <dbReference type="HAMAP-Rule" id="MF_01315"/>
    </source>
</evidence>
<evidence type="ECO:0000256" key="2">
    <source>
        <dbReference type="SAM" id="MobiDB-lite"/>
    </source>
</evidence>
<evidence type="ECO:0000305" key="3"/>